<evidence type="ECO:0000250" key="1"/>
<evidence type="ECO:0000255" key="2">
    <source>
        <dbReference type="HAMAP-Rule" id="MF_00118"/>
    </source>
</evidence>
<comment type="function">
    <text evidence="2">GTP hydrolase that promotes the GTP-dependent binding of aminoacyl-tRNA to the A-site of ribosomes during protein biosynthesis.</text>
</comment>
<comment type="catalytic activity">
    <reaction evidence="2">
        <text>GTP + H2O = GDP + phosphate + H(+)</text>
        <dbReference type="Rhea" id="RHEA:19669"/>
        <dbReference type="ChEBI" id="CHEBI:15377"/>
        <dbReference type="ChEBI" id="CHEBI:15378"/>
        <dbReference type="ChEBI" id="CHEBI:37565"/>
        <dbReference type="ChEBI" id="CHEBI:43474"/>
        <dbReference type="ChEBI" id="CHEBI:58189"/>
        <dbReference type="EC" id="3.6.5.3"/>
    </reaction>
    <physiologicalReaction direction="left-to-right" evidence="2">
        <dbReference type="Rhea" id="RHEA:19670"/>
    </physiologicalReaction>
</comment>
<comment type="subunit">
    <text evidence="2">Monomer.</text>
</comment>
<comment type="subcellular location">
    <subcellularLocation>
        <location evidence="2">Cytoplasm</location>
    </subcellularLocation>
</comment>
<comment type="similarity">
    <text evidence="2">Belongs to the TRAFAC class translation factor GTPase superfamily. Classic translation factor GTPase family. EF-Tu/EF-1A subfamily.</text>
</comment>
<accession>B9IZJ2</accession>
<name>EFTU_BACCQ</name>
<feature type="chain" id="PRO_1000201386" description="Elongation factor Tu">
    <location>
        <begin position="1"/>
        <end position="395"/>
    </location>
</feature>
<feature type="domain" description="tr-type G">
    <location>
        <begin position="10"/>
        <end position="204"/>
    </location>
</feature>
<feature type="region of interest" description="G1" evidence="1">
    <location>
        <begin position="19"/>
        <end position="26"/>
    </location>
</feature>
<feature type="region of interest" description="G2" evidence="1">
    <location>
        <begin position="60"/>
        <end position="64"/>
    </location>
</feature>
<feature type="region of interest" description="G3" evidence="1">
    <location>
        <begin position="81"/>
        <end position="84"/>
    </location>
</feature>
<feature type="region of interest" description="G4" evidence="1">
    <location>
        <begin position="136"/>
        <end position="139"/>
    </location>
</feature>
<feature type="region of interest" description="G5" evidence="1">
    <location>
        <begin position="174"/>
        <end position="176"/>
    </location>
</feature>
<feature type="binding site" evidence="2">
    <location>
        <begin position="19"/>
        <end position="26"/>
    </location>
    <ligand>
        <name>GTP</name>
        <dbReference type="ChEBI" id="CHEBI:37565"/>
    </ligand>
</feature>
<feature type="binding site" evidence="2">
    <location>
        <position position="26"/>
    </location>
    <ligand>
        <name>Mg(2+)</name>
        <dbReference type="ChEBI" id="CHEBI:18420"/>
    </ligand>
</feature>
<feature type="binding site" evidence="2">
    <location>
        <begin position="81"/>
        <end position="85"/>
    </location>
    <ligand>
        <name>GTP</name>
        <dbReference type="ChEBI" id="CHEBI:37565"/>
    </ligand>
</feature>
<feature type="binding site" evidence="2">
    <location>
        <begin position="136"/>
        <end position="139"/>
    </location>
    <ligand>
        <name>GTP</name>
        <dbReference type="ChEBI" id="CHEBI:37565"/>
    </ligand>
</feature>
<gene>
    <name evidence="2" type="primary">tuf</name>
    <name type="ordered locus">BCQ_0121</name>
</gene>
<keyword id="KW-0963">Cytoplasm</keyword>
<keyword id="KW-0251">Elongation factor</keyword>
<keyword id="KW-0342">GTP-binding</keyword>
<keyword id="KW-0378">Hydrolase</keyword>
<keyword id="KW-0460">Magnesium</keyword>
<keyword id="KW-0479">Metal-binding</keyword>
<keyword id="KW-0547">Nucleotide-binding</keyword>
<keyword id="KW-0648">Protein biosynthesis</keyword>
<dbReference type="EC" id="3.6.5.3" evidence="2"/>
<dbReference type="EMBL" id="CP000227">
    <property type="protein sequence ID" value="ACM10636.1"/>
    <property type="molecule type" value="Genomic_DNA"/>
</dbReference>
<dbReference type="SMR" id="B9IZJ2"/>
<dbReference type="KEGG" id="bcq:BCQ_0121"/>
<dbReference type="HOGENOM" id="CLU_007265_0_1_9"/>
<dbReference type="Proteomes" id="UP000000441">
    <property type="component" value="Chromosome"/>
</dbReference>
<dbReference type="GO" id="GO:0005829">
    <property type="term" value="C:cytosol"/>
    <property type="evidence" value="ECO:0007669"/>
    <property type="project" value="TreeGrafter"/>
</dbReference>
<dbReference type="GO" id="GO:0005525">
    <property type="term" value="F:GTP binding"/>
    <property type="evidence" value="ECO:0007669"/>
    <property type="project" value="UniProtKB-UniRule"/>
</dbReference>
<dbReference type="GO" id="GO:0003924">
    <property type="term" value="F:GTPase activity"/>
    <property type="evidence" value="ECO:0007669"/>
    <property type="project" value="InterPro"/>
</dbReference>
<dbReference type="GO" id="GO:0003746">
    <property type="term" value="F:translation elongation factor activity"/>
    <property type="evidence" value="ECO:0007669"/>
    <property type="project" value="UniProtKB-UniRule"/>
</dbReference>
<dbReference type="CDD" id="cd01884">
    <property type="entry name" value="EF_Tu"/>
    <property type="match status" value="1"/>
</dbReference>
<dbReference type="CDD" id="cd03697">
    <property type="entry name" value="EFTU_II"/>
    <property type="match status" value="1"/>
</dbReference>
<dbReference type="CDD" id="cd03707">
    <property type="entry name" value="EFTU_III"/>
    <property type="match status" value="1"/>
</dbReference>
<dbReference type="FunFam" id="2.40.30.10:FF:000001">
    <property type="entry name" value="Elongation factor Tu"/>
    <property type="match status" value="1"/>
</dbReference>
<dbReference type="FunFam" id="3.40.50.300:FF:000003">
    <property type="entry name" value="Elongation factor Tu"/>
    <property type="match status" value="1"/>
</dbReference>
<dbReference type="Gene3D" id="3.40.50.300">
    <property type="entry name" value="P-loop containing nucleotide triphosphate hydrolases"/>
    <property type="match status" value="1"/>
</dbReference>
<dbReference type="Gene3D" id="2.40.30.10">
    <property type="entry name" value="Translation factors"/>
    <property type="match status" value="2"/>
</dbReference>
<dbReference type="HAMAP" id="MF_00118_B">
    <property type="entry name" value="EF_Tu_B"/>
    <property type="match status" value="1"/>
</dbReference>
<dbReference type="InterPro" id="IPR041709">
    <property type="entry name" value="EF-Tu_GTP-bd"/>
</dbReference>
<dbReference type="InterPro" id="IPR050055">
    <property type="entry name" value="EF-Tu_GTPase"/>
</dbReference>
<dbReference type="InterPro" id="IPR004161">
    <property type="entry name" value="EFTu-like_2"/>
</dbReference>
<dbReference type="InterPro" id="IPR033720">
    <property type="entry name" value="EFTU_2"/>
</dbReference>
<dbReference type="InterPro" id="IPR031157">
    <property type="entry name" value="G_TR_CS"/>
</dbReference>
<dbReference type="InterPro" id="IPR027417">
    <property type="entry name" value="P-loop_NTPase"/>
</dbReference>
<dbReference type="InterPro" id="IPR005225">
    <property type="entry name" value="Small_GTP-bd"/>
</dbReference>
<dbReference type="InterPro" id="IPR000795">
    <property type="entry name" value="T_Tr_GTP-bd_dom"/>
</dbReference>
<dbReference type="InterPro" id="IPR009000">
    <property type="entry name" value="Transl_B-barrel_sf"/>
</dbReference>
<dbReference type="InterPro" id="IPR009001">
    <property type="entry name" value="Transl_elong_EF1A/Init_IF2_C"/>
</dbReference>
<dbReference type="InterPro" id="IPR004541">
    <property type="entry name" value="Transl_elong_EFTu/EF1A_bac/org"/>
</dbReference>
<dbReference type="InterPro" id="IPR004160">
    <property type="entry name" value="Transl_elong_EFTu/EF1A_C"/>
</dbReference>
<dbReference type="NCBIfam" id="TIGR00485">
    <property type="entry name" value="EF-Tu"/>
    <property type="match status" value="1"/>
</dbReference>
<dbReference type="NCBIfam" id="NF000766">
    <property type="entry name" value="PRK00049.1"/>
    <property type="match status" value="1"/>
</dbReference>
<dbReference type="NCBIfam" id="NF009372">
    <property type="entry name" value="PRK12735.1"/>
    <property type="match status" value="1"/>
</dbReference>
<dbReference type="NCBIfam" id="NF009373">
    <property type="entry name" value="PRK12736.1"/>
    <property type="match status" value="1"/>
</dbReference>
<dbReference type="NCBIfam" id="TIGR00231">
    <property type="entry name" value="small_GTP"/>
    <property type="match status" value="1"/>
</dbReference>
<dbReference type="PANTHER" id="PTHR43721:SF22">
    <property type="entry name" value="ELONGATION FACTOR TU, MITOCHONDRIAL"/>
    <property type="match status" value="1"/>
</dbReference>
<dbReference type="PANTHER" id="PTHR43721">
    <property type="entry name" value="ELONGATION FACTOR TU-RELATED"/>
    <property type="match status" value="1"/>
</dbReference>
<dbReference type="Pfam" id="PF00009">
    <property type="entry name" value="GTP_EFTU"/>
    <property type="match status" value="1"/>
</dbReference>
<dbReference type="Pfam" id="PF03144">
    <property type="entry name" value="GTP_EFTU_D2"/>
    <property type="match status" value="1"/>
</dbReference>
<dbReference type="Pfam" id="PF03143">
    <property type="entry name" value="GTP_EFTU_D3"/>
    <property type="match status" value="1"/>
</dbReference>
<dbReference type="PRINTS" id="PR00315">
    <property type="entry name" value="ELONGATNFCT"/>
</dbReference>
<dbReference type="SUPFAM" id="SSF50465">
    <property type="entry name" value="EF-Tu/eEF-1alpha/eIF2-gamma C-terminal domain"/>
    <property type="match status" value="1"/>
</dbReference>
<dbReference type="SUPFAM" id="SSF52540">
    <property type="entry name" value="P-loop containing nucleoside triphosphate hydrolases"/>
    <property type="match status" value="1"/>
</dbReference>
<dbReference type="SUPFAM" id="SSF50447">
    <property type="entry name" value="Translation proteins"/>
    <property type="match status" value="1"/>
</dbReference>
<dbReference type="PROSITE" id="PS00301">
    <property type="entry name" value="G_TR_1"/>
    <property type="match status" value="1"/>
</dbReference>
<dbReference type="PROSITE" id="PS51722">
    <property type="entry name" value="G_TR_2"/>
    <property type="match status" value="1"/>
</dbReference>
<reference key="1">
    <citation type="journal article" date="2009" name="J. Bacteriol.">
        <title>Complete genome sequence of the extremophilic Bacillus cereus strain Q1 with industrial applications.</title>
        <authorList>
            <person name="Xiong Z."/>
            <person name="Jiang Y."/>
            <person name="Qi D."/>
            <person name="Lu H."/>
            <person name="Yang F."/>
            <person name="Yang J."/>
            <person name="Chen L."/>
            <person name="Sun L."/>
            <person name="Xu X."/>
            <person name="Xue Y."/>
            <person name="Zhu Y."/>
            <person name="Jin Q."/>
        </authorList>
    </citation>
    <scope>NUCLEOTIDE SEQUENCE [LARGE SCALE GENOMIC DNA]</scope>
    <source>
        <strain>Q1</strain>
    </source>
</reference>
<protein>
    <recommendedName>
        <fullName evidence="2">Elongation factor Tu</fullName>
        <shortName evidence="2">EF-Tu</shortName>
        <ecNumber evidence="2">3.6.5.3</ecNumber>
    </recommendedName>
</protein>
<organism>
    <name type="scientific">Bacillus cereus (strain Q1)</name>
    <dbReference type="NCBI Taxonomy" id="361100"/>
    <lineage>
        <taxon>Bacteria</taxon>
        <taxon>Bacillati</taxon>
        <taxon>Bacillota</taxon>
        <taxon>Bacilli</taxon>
        <taxon>Bacillales</taxon>
        <taxon>Bacillaceae</taxon>
        <taxon>Bacillus</taxon>
        <taxon>Bacillus cereus group</taxon>
    </lineage>
</organism>
<sequence length="395" mass="42925">MAKAKFERSKPHVNIGTIGHVDHGKTTLTAAITTVLAKAGGAEARGYDQIDAAPEERERGITISTAHVEYETETRHYAHVDCPGHADYVKNMITGAAQMDGGILVVSAADGPMPQTREHILLSRQVGVPYIVVFLNKCDMVDDEELLELVEMEVRDLLSEYGFPGDDIPVIKGSALKALQGEADWEAKIIELMAEVDAYIPTPERETDKPFLMPVEDVFSITGRGTVATGRVERGIVKVGDVVEIIGLAEENASTTVTGVEMFRKLLDQAQAGDNIGALLRGVAREDIQRGQVLAKSGSVKAHAKFKAEVFVLSKEEGGRHTPFFANYRPQFYFRTTDVTGIIQLPEGTEMVMPGDNVEMTIELIAPIAIEEGTKFSIREGGRTVGYGVVATIVE</sequence>
<proteinExistence type="inferred from homology"/>